<keyword id="KW-0002">3D-structure</keyword>
<keyword id="KW-0119">Carbohydrate metabolism</keyword>
<keyword id="KW-0136">Cellulose degradation</keyword>
<keyword id="KW-0903">Direct protein sequencing</keyword>
<keyword id="KW-0326">Glycosidase</keyword>
<keyword id="KW-0378">Hydrolase</keyword>
<keyword id="KW-0624">Polysaccharide degradation</keyword>
<keyword id="KW-0964">Secreted</keyword>
<keyword id="KW-0732">Signal</keyword>
<gene>
    <name type="primary">cel5A</name>
</gene>
<evidence type="ECO:0000255" key="1"/>
<evidence type="ECO:0000256" key="2">
    <source>
        <dbReference type="SAM" id="MobiDB-lite"/>
    </source>
</evidence>
<evidence type="ECO:0000269" key="3">
    <source>
    </source>
</evidence>
<evidence type="ECO:0000269" key="4">
    <source>
    </source>
</evidence>
<evidence type="ECO:0000269" key="5">
    <source>
    </source>
</evidence>
<evidence type="ECO:0000269" key="6">
    <source ref="4"/>
</evidence>
<evidence type="ECO:0000305" key="7"/>
<evidence type="ECO:0000305" key="8">
    <source>
    </source>
</evidence>
<evidence type="ECO:0000305" key="9">
    <source>
    </source>
</evidence>
<evidence type="ECO:0000305" key="10">
    <source>
    </source>
</evidence>
<evidence type="ECO:0000305" key="11">
    <source ref="4"/>
</evidence>
<evidence type="ECO:0007744" key="12">
    <source>
        <dbReference type="PDB" id="1A3H"/>
    </source>
</evidence>
<evidence type="ECO:0007744" key="13">
    <source>
        <dbReference type="PDB" id="1H11"/>
    </source>
</evidence>
<evidence type="ECO:0007744" key="14">
    <source>
        <dbReference type="PDB" id="1H2J"/>
    </source>
</evidence>
<evidence type="ECO:0007744" key="15">
    <source>
        <dbReference type="PDB" id="1H5V"/>
    </source>
</evidence>
<evidence type="ECO:0007744" key="16">
    <source>
        <dbReference type="PDB" id="1HF6"/>
    </source>
</evidence>
<evidence type="ECO:0007744" key="17">
    <source>
        <dbReference type="PDB" id="1QI0"/>
    </source>
</evidence>
<evidence type="ECO:0007744" key="18">
    <source>
        <dbReference type="PDB" id="1QI2"/>
    </source>
</evidence>
<evidence type="ECO:0007744" key="19">
    <source>
        <dbReference type="PDB" id="2A3H"/>
    </source>
</evidence>
<evidence type="ECO:0007744" key="20">
    <source>
        <dbReference type="PDB" id="3A3H"/>
    </source>
</evidence>
<evidence type="ECO:0007744" key="21">
    <source>
        <dbReference type="PDB" id="4A3H"/>
    </source>
</evidence>
<evidence type="ECO:0007744" key="22">
    <source>
        <dbReference type="PDB" id="5A3H"/>
    </source>
</evidence>
<evidence type="ECO:0007744" key="23">
    <source>
        <dbReference type="PDB" id="6A3H"/>
    </source>
</evidence>
<evidence type="ECO:0007744" key="24">
    <source>
        <dbReference type="PDB" id="7A3H"/>
    </source>
</evidence>
<evidence type="ECO:0007744" key="25">
    <source>
        <dbReference type="PDB" id="8A3H"/>
    </source>
</evidence>
<evidence type="ECO:0007829" key="26">
    <source>
        <dbReference type="PDB" id="1H5V"/>
    </source>
</evidence>
<evidence type="ECO:0007829" key="27">
    <source>
        <dbReference type="PDB" id="7A3H"/>
    </source>
</evidence>
<dbReference type="EC" id="3.2.1.4" evidence="4 5"/>
<dbReference type="EMBL" id="AF067428">
    <property type="protein sequence ID" value="AAC19169.1"/>
    <property type="molecule type" value="Genomic_DNA"/>
</dbReference>
<dbReference type="PDB" id="1A3H">
    <property type="method" value="X-ray"/>
    <property type="resolution" value="1.57 A"/>
    <property type="chains" value="A=30-329"/>
</dbReference>
<dbReference type="PDB" id="1E5J">
    <property type="method" value="X-ray"/>
    <property type="resolution" value="1.85 A"/>
    <property type="chains" value="A=27-331"/>
</dbReference>
<dbReference type="PDB" id="1H11">
    <property type="method" value="X-ray"/>
    <property type="resolution" value="1.08 A"/>
    <property type="chains" value="A=27-329"/>
</dbReference>
<dbReference type="PDB" id="1H2J">
    <property type="method" value="X-ray"/>
    <property type="resolution" value="1.15 A"/>
    <property type="chains" value="A=27-329"/>
</dbReference>
<dbReference type="PDB" id="1H5V">
    <property type="method" value="X-ray"/>
    <property type="resolution" value="1.10 A"/>
    <property type="chains" value="A=27-330"/>
</dbReference>
<dbReference type="PDB" id="1HF6">
    <property type="method" value="X-ray"/>
    <property type="resolution" value="1.15 A"/>
    <property type="chains" value="A=27-329"/>
</dbReference>
<dbReference type="PDB" id="1OCQ">
    <property type="method" value="X-ray"/>
    <property type="resolution" value="1.08 A"/>
    <property type="chains" value="A=27-329"/>
</dbReference>
<dbReference type="PDB" id="1QHZ">
    <property type="method" value="X-ray"/>
    <property type="resolution" value="1.95 A"/>
    <property type="chains" value="A=27-331"/>
</dbReference>
<dbReference type="PDB" id="1QI0">
    <property type="method" value="X-ray"/>
    <property type="resolution" value="2.10 A"/>
    <property type="chains" value="A=27-331"/>
</dbReference>
<dbReference type="PDB" id="1QI2">
    <property type="method" value="X-ray"/>
    <property type="resolution" value="1.75 A"/>
    <property type="chains" value="A=27-331"/>
</dbReference>
<dbReference type="PDB" id="1W3K">
    <property type="method" value="X-ray"/>
    <property type="resolution" value="1.20 A"/>
    <property type="chains" value="A=27-329"/>
</dbReference>
<dbReference type="PDB" id="1W3L">
    <property type="method" value="X-ray"/>
    <property type="resolution" value="1.04 A"/>
    <property type="chains" value="A=27-329"/>
</dbReference>
<dbReference type="PDB" id="2A3H">
    <property type="method" value="X-ray"/>
    <property type="resolution" value="2.00 A"/>
    <property type="chains" value="A=30-329"/>
</dbReference>
<dbReference type="PDB" id="2V38">
    <property type="method" value="X-ray"/>
    <property type="resolution" value="1.50 A"/>
    <property type="chains" value="A=27-331"/>
</dbReference>
<dbReference type="PDB" id="3A3H">
    <property type="method" value="X-ray"/>
    <property type="resolution" value="1.64 A"/>
    <property type="chains" value="A=30-329"/>
</dbReference>
<dbReference type="PDB" id="4A3H">
    <property type="method" value="X-ray"/>
    <property type="resolution" value="1.65 A"/>
    <property type="chains" value="A=27-329"/>
</dbReference>
<dbReference type="PDB" id="5A3H">
    <property type="method" value="X-ray"/>
    <property type="resolution" value="1.82 A"/>
    <property type="chains" value="A=27-329"/>
</dbReference>
<dbReference type="PDB" id="6A3H">
    <property type="method" value="X-ray"/>
    <property type="resolution" value="1.68 A"/>
    <property type="chains" value="A=27-329"/>
</dbReference>
<dbReference type="PDB" id="7A3H">
    <property type="method" value="X-ray"/>
    <property type="resolution" value="0.95 A"/>
    <property type="chains" value="A=27-329"/>
</dbReference>
<dbReference type="PDB" id="8A3H">
    <property type="method" value="X-ray"/>
    <property type="resolution" value="0.97 A"/>
    <property type="chains" value="A=27-329"/>
</dbReference>
<dbReference type="PDBsum" id="1A3H"/>
<dbReference type="PDBsum" id="1E5J"/>
<dbReference type="PDBsum" id="1H11"/>
<dbReference type="PDBsum" id="1H2J"/>
<dbReference type="PDBsum" id="1H5V"/>
<dbReference type="PDBsum" id="1HF6"/>
<dbReference type="PDBsum" id="1OCQ"/>
<dbReference type="PDBsum" id="1QHZ"/>
<dbReference type="PDBsum" id="1QI0"/>
<dbReference type="PDBsum" id="1QI2"/>
<dbReference type="PDBsum" id="1W3K"/>
<dbReference type="PDBsum" id="1W3L"/>
<dbReference type="PDBsum" id="2A3H"/>
<dbReference type="PDBsum" id="2V38"/>
<dbReference type="PDBsum" id="3A3H"/>
<dbReference type="PDBsum" id="4A3H"/>
<dbReference type="PDBsum" id="5A3H"/>
<dbReference type="PDBsum" id="6A3H"/>
<dbReference type="PDBsum" id="7A3H"/>
<dbReference type="PDBsum" id="8A3H"/>
<dbReference type="SMR" id="O85465"/>
<dbReference type="DrugBank" id="DB04086">
    <property type="generic name" value="2',4'-Dinitrophenyl-2deoxy-2-Fluro-B-D-Cellobioside"/>
</dbReference>
<dbReference type="DrugBank" id="DB03584">
    <property type="generic name" value="4-Thio-beta-D-glucopyranose"/>
</dbReference>
<dbReference type="DrugBank" id="DB04545">
    <property type="generic name" value="Afegostat"/>
</dbReference>
<dbReference type="DrugBank" id="DB02379">
    <property type="generic name" value="Beta-D-Glucose"/>
</dbReference>
<dbReference type="DrugBank" id="DB02061">
    <property type="generic name" value="Cellobiose"/>
</dbReference>
<dbReference type="DrugBank" id="DB01633">
    <property type="generic name" value="Deoxy-2-fluoro-beta-D-cellotrioside"/>
</dbReference>
<dbReference type="DrugBank" id="DB02017">
    <property type="generic name" value="Imidazole-Derived Cellobiose"/>
</dbReference>
<dbReference type="DrugBank" id="DB01642">
    <property type="generic name" value="methyl beta-D-glucopyranoside"/>
</dbReference>
<dbReference type="DrugBank" id="DB03862">
    <property type="generic name" value="Tetrahydrooxazine"/>
</dbReference>
<dbReference type="CAZy" id="CBM5">
    <property type="family name" value="Carbohydrate-Binding Module Family 5"/>
</dbReference>
<dbReference type="CAZy" id="GH5">
    <property type="family name" value="Glycoside Hydrolase Family 5"/>
</dbReference>
<dbReference type="EvolutionaryTrace" id="O85465"/>
<dbReference type="GO" id="GO:0005576">
    <property type="term" value="C:extracellular region"/>
    <property type="evidence" value="ECO:0007669"/>
    <property type="project" value="UniProtKB-SubCell"/>
</dbReference>
<dbReference type="GO" id="GO:0030246">
    <property type="term" value="F:carbohydrate binding"/>
    <property type="evidence" value="ECO:0007669"/>
    <property type="project" value="InterPro"/>
</dbReference>
<dbReference type="GO" id="GO:0008810">
    <property type="term" value="F:cellulase activity"/>
    <property type="evidence" value="ECO:0007669"/>
    <property type="project" value="UniProtKB-EC"/>
</dbReference>
<dbReference type="GO" id="GO:0030245">
    <property type="term" value="P:cellulose catabolic process"/>
    <property type="evidence" value="ECO:0007669"/>
    <property type="project" value="UniProtKB-KW"/>
</dbReference>
<dbReference type="CDD" id="cd12215">
    <property type="entry name" value="ChiC_BD"/>
    <property type="match status" value="1"/>
</dbReference>
<dbReference type="Gene3D" id="2.10.10.20">
    <property type="entry name" value="Carbohydrate-binding module superfamily 5/12"/>
    <property type="match status" value="1"/>
</dbReference>
<dbReference type="Gene3D" id="3.20.20.80">
    <property type="entry name" value="Glycosidases"/>
    <property type="match status" value="1"/>
</dbReference>
<dbReference type="InterPro" id="IPR003610">
    <property type="entry name" value="CBM5/12"/>
</dbReference>
<dbReference type="InterPro" id="IPR036573">
    <property type="entry name" value="CBM_sf_5/12"/>
</dbReference>
<dbReference type="InterPro" id="IPR001547">
    <property type="entry name" value="Glyco_hydro_5"/>
</dbReference>
<dbReference type="InterPro" id="IPR018087">
    <property type="entry name" value="Glyco_hydro_5_CS"/>
</dbReference>
<dbReference type="InterPro" id="IPR017853">
    <property type="entry name" value="Glycoside_hydrolase_SF"/>
</dbReference>
<dbReference type="PANTHER" id="PTHR34142">
    <property type="entry name" value="ENDO-BETA-1,4-GLUCANASE A"/>
    <property type="match status" value="1"/>
</dbReference>
<dbReference type="PANTHER" id="PTHR34142:SF1">
    <property type="entry name" value="GLYCOSIDE HYDROLASE FAMILY 5 DOMAIN-CONTAINING PROTEIN"/>
    <property type="match status" value="1"/>
</dbReference>
<dbReference type="Pfam" id="PF02839">
    <property type="entry name" value="CBM_5_12"/>
    <property type="match status" value="1"/>
</dbReference>
<dbReference type="Pfam" id="PF00150">
    <property type="entry name" value="Cellulase"/>
    <property type="match status" value="1"/>
</dbReference>
<dbReference type="SMART" id="SM00495">
    <property type="entry name" value="ChtBD3"/>
    <property type="match status" value="1"/>
</dbReference>
<dbReference type="SUPFAM" id="SSF51445">
    <property type="entry name" value="(Trans)glycosidases"/>
    <property type="match status" value="1"/>
</dbReference>
<dbReference type="SUPFAM" id="SSF51055">
    <property type="entry name" value="Carbohydrate binding domain"/>
    <property type="match status" value="1"/>
</dbReference>
<dbReference type="PROSITE" id="PS00659">
    <property type="entry name" value="GLYCOSYL_HYDROL_F5"/>
    <property type="match status" value="1"/>
</dbReference>
<proteinExistence type="evidence at protein level"/>
<organism>
    <name type="scientific">Salipaludibacillus agaradhaerens</name>
    <name type="common">Bacillus agaradhaerens</name>
    <dbReference type="NCBI Taxonomy" id="76935"/>
    <lineage>
        <taxon>Bacteria</taxon>
        <taxon>Bacillati</taxon>
        <taxon>Bacillota</taxon>
        <taxon>Bacilli</taxon>
        <taxon>Bacillales</taxon>
        <taxon>Bacillaceae</taxon>
    </lineage>
</organism>
<reference key="1">
    <citation type="submission" date="1998-05" db="EMBL/GenBank/DDBJ databases">
        <authorList>
            <person name="Bjornvad M.E."/>
        </authorList>
    </citation>
    <scope>NUCLEOTIDE SEQUENCE [GENOMIC DNA]</scope>
    <source>
        <strain>ATCC 700163 / DSM 8721 / LMG 17948 / NCIMB 40482 / PN-105</strain>
    </source>
</reference>
<reference evidence="12 19" key="2">
    <citation type="journal article" date="1998" name="Biochemistry">
        <title>Structure of the Bacillus agaradherans family 5 endoglucanase at 1.6-A and its cellobiose complex at 2.0-A resolution.</title>
        <authorList>
            <person name="Davies G.J."/>
            <person name="Dauter M."/>
            <person name="Brzozowski A.M."/>
            <person name="Bjoernvad M.E."/>
            <person name="Andersen K.V."/>
            <person name="Schuelein M."/>
        </authorList>
    </citation>
    <scope>X-RAY CRYSTALLOGRAPHY (1.57 ANGSTROMS) OF 30-329 IN COMPLEX WITH BETA-CELLOBIOSE</scope>
    <scope>PROTEIN SEQUENCE OF 27-45</scope>
    <scope>CATALYTIC ACTIVITY</scope>
    <scope>ACTIVE SITE</scope>
    <source>
        <strain>ATCC 700163 / DSM 8721 / LMG 17948 / NCIMB 40482 / PN-105</strain>
    </source>
</reference>
<reference evidence="20 21 22 23 24" key="3">
    <citation type="journal article" date="1998" name="Biochemistry">
        <title>Snapshots along an enzymatic reaction coordinate: analysis of a retaining beta-glycoside hydrolase.</title>
        <authorList>
            <person name="Davies G.J."/>
            <person name="MacKenzie L.F."/>
            <person name="Varrot A."/>
            <person name="Dauter M."/>
            <person name="Brzozowski A.M."/>
            <person name="Schuelein M."/>
            <person name="Withers S.G."/>
        </authorList>
    </citation>
    <scope>X-RAY CRYSTALLOGRAPHY (1.64 ANGSTROMS) OF 30-329 IN COMPLEXES WITH SUBSTRATE ANALOGS</scope>
    <scope>CATALYTIC ACTIVITY</scope>
    <scope>ACTIVE SITE</scope>
    <source>
        <strain>ATCC 700163 / DSM 8721 / LMG 17948 / NCIMB 40482 / PN-105</strain>
    </source>
</reference>
<reference evidence="25" key="4">
    <citation type="journal article" date="1999" name="J. Am. Chem. Soc.">
        <title>Lateral protonation of a glycosidase inhibitor. Structure of the Bacillus agaradhaerens Cel5A in complex with a cellobiose-derived imidazole at 0.97 A resolution.</title>
        <authorList>
            <person name="Varrot A."/>
            <person name="Schulein M."/>
            <person name="Pipelier M."/>
            <person name="Vasella A."/>
            <person name="Davies G.J."/>
        </authorList>
    </citation>
    <scope>X-RAY CRYSTALLOGRAPHY (0.97 ANGSTROMS) OF 27-329 IN COMPLEX WITH SUBSTRATE ANALOG</scope>
    <scope>ACTIVE SITE</scope>
</reference>
<reference evidence="13 14 16" key="5">
    <citation type="journal article" date="2003" name="Acta Crystallogr. D">
        <title>Direct experimental observation of the hydrogen-bonding network of a glycosidase along its reaction coordinate revealed by atomic resolution analyses of endoglucanase Cel5A.</title>
        <authorList>
            <person name="Varrot A."/>
            <person name="Davies G.J."/>
        </authorList>
    </citation>
    <scope>X-RAY CRYSTALLOGRAPHY (1.08 ANGSTROMS) OF 27-329 IN COMPLEXES WITH SUBSTRATE ANALOGS</scope>
    <scope>ACTIVE SITE</scope>
</reference>
<sequence>MKKITTIFVVLLMTVALFSIGNTTAADNDSVVEEHGQLSISNGELVNERGEQVQLKGMSSHGLQWYGQFVNYESMKWLRDDWGINVFRAAMYTSSGGYIDDPSVKEKVKEAVEAAIDLDIYVIIDWHILSDNDPNIYKEEAKDFFDEMSELYGDYPNVIYEIANEPNGSDVTWGNQIKPYAEEVIPIIRNNDPNNIIIVGTGTWSQDVHHAADNQLADPNVMYAFHFYAGTHGQNLRDQVDYALDQGAAIFVSEWGTSAATGDGGVFLDEAQVWIDFMDERNLSWANWSLTHKDESSAALMPGANPTGGWTEAELSPSGTFVREKIRESASIPPSDPTPPSDPGEPDPTPPSDPGEYPAWDPNQIYTNEIVYHNGQLWQAKWWTQNQEPGDPYGPWEPLN</sequence>
<name>GUN5_SALAG</name>
<accession>O85465</accession>
<feature type="signal peptide" evidence="4">
    <location>
        <begin position="1"/>
        <end position="26"/>
    </location>
</feature>
<feature type="chain" id="PRO_0000184043" description="Endoglucanase 5A">
    <location>
        <begin position="27"/>
        <end position="400"/>
    </location>
</feature>
<feature type="domain" description="Chitin-binding type-3" evidence="1">
    <location>
        <begin position="357"/>
        <end position="396"/>
    </location>
</feature>
<feature type="region of interest" description="Disordered" evidence="2">
    <location>
        <begin position="328"/>
        <end position="363"/>
    </location>
</feature>
<feature type="compositionally biased region" description="Pro residues" evidence="2">
    <location>
        <begin position="334"/>
        <end position="353"/>
    </location>
</feature>
<feature type="active site" description="Proton donor" evidence="8 9 10 11">
    <location>
        <position position="165"/>
    </location>
</feature>
<feature type="active site" description="Nucleophile" evidence="3 4 5 6 13 18 22 23 25">
    <location>
        <position position="254"/>
    </location>
</feature>
<feature type="binding site" evidence="3 4 5 16 19 20">
    <location>
        <position position="61"/>
    </location>
    <ligand>
        <name>substrate</name>
    </ligand>
</feature>
<feature type="binding site" evidence="3 4 5 16 17 19 20">
    <location>
        <begin position="65"/>
        <end position="66"/>
    </location>
    <ligand>
        <name>substrate</name>
    </ligand>
</feature>
<feature type="binding site" evidence="3 4 5 16 17 19 20">
    <location>
        <position position="92"/>
    </location>
    <ligand>
        <name>substrate</name>
    </ligand>
</feature>
<feature type="binding site" evidence="3 5 6 16 20">
    <location>
        <position position="127"/>
    </location>
    <ligand>
        <name>substrate</name>
    </ligand>
</feature>
<feature type="binding site" evidence="3 5 16 20">
    <location>
        <position position="228"/>
    </location>
    <ligand>
        <name>substrate</name>
    </ligand>
</feature>
<feature type="binding site" evidence="3 5 16 20">
    <location>
        <begin position="260"/>
        <end position="261"/>
    </location>
    <ligand>
        <name>substrate</name>
    </ligand>
</feature>
<feature type="binding site" evidence="3 4 5 6 15 16 17 19 20 25">
    <location>
        <position position="288"/>
    </location>
    <ligand>
        <name>substrate</name>
    </ligand>
</feature>
<feature type="binding site" evidence="3 4 5 16 17 19 20">
    <location>
        <begin position="293"/>
        <end position="295"/>
    </location>
    <ligand>
        <name>substrate</name>
    </ligand>
</feature>
<feature type="helix" evidence="27">
    <location>
        <begin position="31"/>
        <end position="35"/>
    </location>
</feature>
<feature type="strand" evidence="27">
    <location>
        <begin position="39"/>
        <end position="41"/>
    </location>
</feature>
<feature type="strand" evidence="27">
    <location>
        <begin position="44"/>
        <end position="46"/>
    </location>
</feature>
<feature type="strand" evidence="27">
    <location>
        <begin position="56"/>
        <end position="61"/>
    </location>
</feature>
<feature type="helix" evidence="27">
    <location>
        <begin position="63"/>
        <end position="66"/>
    </location>
</feature>
<feature type="helix" evidence="27">
    <location>
        <begin position="67"/>
        <end position="69"/>
    </location>
</feature>
<feature type="helix" evidence="27">
    <location>
        <begin position="72"/>
        <end position="80"/>
    </location>
</feature>
<feature type="strand" evidence="27">
    <location>
        <begin position="86"/>
        <end position="94"/>
    </location>
</feature>
<feature type="turn" evidence="27">
    <location>
        <begin position="98"/>
        <end position="100"/>
    </location>
</feature>
<feature type="helix" evidence="27">
    <location>
        <begin position="104"/>
        <end position="118"/>
    </location>
</feature>
<feature type="strand" evidence="27">
    <location>
        <begin position="121"/>
        <end position="127"/>
    </location>
</feature>
<feature type="strand" evidence="27">
    <location>
        <begin position="129"/>
        <end position="131"/>
    </location>
</feature>
<feature type="turn" evidence="27">
    <location>
        <begin position="134"/>
        <end position="137"/>
    </location>
</feature>
<feature type="helix" evidence="27">
    <location>
        <begin position="138"/>
        <end position="152"/>
    </location>
</feature>
<feature type="strand" evidence="27">
    <location>
        <begin position="158"/>
        <end position="161"/>
    </location>
</feature>
<feature type="turn" evidence="27">
    <location>
        <begin position="173"/>
        <end position="176"/>
    </location>
</feature>
<feature type="helix" evidence="27">
    <location>
        <begin position="177"/>
        <end position="189"/>
    </location>
</feature>
<feature type="strand" evidence="27">
    <location>
        <begin position="193"/>
        <end position="195"/>
    </location>
</feature>
<feature type="strand" evidence="27">
    <location>
        <begin position="197"/>
        <end position="199"/>
    </location>
</feature>
<feature type="helix" evidence="27">
    <location>
        <begin position="202"/>
        <end position="205"/>
    </location>
</feature>
<feature type="helix" evidence="27">
    <location>
        <begin position="208"/>
        <end position="212"/>
    </location>
</feature>
<feature type="strand" evidence="27">
    <location>
        <begin position="221"/>
        <end position="228"/>
    </location>
</feature>
<feature type="turn" evidence="26">
    <location>
        <begin position="229"/>
        <end position="231"/>
    </location>
</feature>
<feature type="helix" evidence="27">
    <location>
        <begin position="234"/>
        <end position="245"/>
    </location>
</feature>
<feature type="strand" evidence="27">
    <location>
        <begin position="250"/>
        <end position="258"/>
    </location>
</feature>
<feature type="strand" evidence="26">
    <location>
        <begin position="264"/>
        <end position="266"/>
    </location>
</feature>
<feature type="helix" evidence="27">
    <location>
        <begin position="268"/>
        <end position="280"/>
    </location>
</feature>
<feature type="strand" evidence="27">
    <location>
        <begin position="285"/>
        <end position="291"/>
    </location>
</feature>
<feature type="helix" evidence="27">
    <location>
        <begin position="312"/>
        <end position="314"/>
    </location>
</feature>
<feature type="helix" evidence="27">
    <location>
        <begin position="317"/>
        <end position="328"/>
    </location>
</feature>
<protein>
    <recommendedName>
        <fullName>Endoglucanase 5A</fullName>
        <ecNumber evidence="4 5">3.2.1.4</ecNumber>
    </recommendedName>
    <alternativeName>
        <fullName>Alkaline cellulase</fullName>
    </alternativeName>
    <alternativeName>
        <fullName>Endo-1,4-beta-glucanase 5A</fullName>
    </alternativeName>
</protein>
<comment type="catalytic activity">
    <reaction evidence="4 5">
        <text>Endohydrolysis of (1-&gt;4)-beta-D-glucosidic linkages in cellulose, lichenin and cereal beta-D-glucans.</text>
        <dbReference type="EC" id="3.2.1.4"/>
    </reaction>
</comment>
<comment type="subunit">
    <text evidence="4">Monomer.</text>
</comment>
<comment type="subcellular location">
    <subcellularLocation>
        <location evidence="7">Secreted</location>
    </subcellularLocation>
</comment>
<comment type="similarity">
    <text evidence="7">Belongs to the glycosyl hydrolase 5 (cellulase A) family.</text>
</comment>